<name>PCKA_ECO45</name>
<proteinExistence type="inferred from homology"/>
<feature type="chain" id="PRO_1000125060" description="Phosphoenolpyruvate carboxykinase (ATP)">
    <location>
        <begin position="1"/>
        <end position="540"/>
    </location>
</feature>
<feature type="binding site" evidence="1">
    <location>
        <position position="65"/>
    </location>
    <ligand>
        <name>substrate</name>
    </ligand>
</feature>
<feature type="binding site" evidence="1">
    <location>
        <position position="207"/>
    </location>
    <ligand>
        <name>substrate</name>
    </ligand>
</feature>
<feature type="binding site" evidence="1">
    <location>
        <position position="213"/>
    </location>
    <ligand>
        <name>ATP</name>
        <dbReference type="ChEBI" id="CHEBI:30616"/>
    </ligand>
</feature>
<feature type="binding site" evidence="1">
    <location>
        <position position="213"/>
    </location>
    <ligand>
        <name>Mn(2+)</name>
        <dbReference type="ChEBI" id="CHEBI:29035"/>
    </ligand>
</feature>
<feature type="binding site" evidence="1">
    <location>
        <position position="213"/>
    </location>
    <ligand>
        <name>substrate</name>
    </ligand>
</feature>
<feature type="binding site" evidence="1">
    <location>
        <position position="232"/>
    </location>
    <ligand>
        <name>ATP</name>
        <dbReference type="ChEBI" id="CHEBI:30616"/>
    </ligand>
</feature>
<feature type="binding site" evidence="1">
    <location>
        <position position="232"/>
    </location>
    <ligand>
        <name>Mn(2+)</name>
        <dbReference type="ChEBI" id="CHEBI:29035"/>
    </ligand>
</feature>
<feature type="binding site" evidence="1">
    <location>
        <begin position="248"/>
        <end position="256"/>
    </location>
    <ligand>
        <name>ATP</name>
        <dbReference type="ChEBI" id="CHEBI:30616"/>
    </ligand>
</feature>
<feature type="binding site" evidence="1">
    <location>
        <position position="269"/>
    </location>
    <ligand>
        <name>Mn(2+)</name>
        <dbReference type="ChEBI" id="CHEBI:29035"/>
    </ligand>
</feature>
<feature type="binding site" evidence="1">
    <location>
        <position position="297"/>
    </location>
    <ligand>
        <name>ATP</name>
        <dbReference type="ChEBI" id="CHEBI:30616"/>
    </ligand>
</feature>
<feature type="binding site" evidence="1">
    <location>
        <position position="333"/>
    </location>
    <ligand>
        <name>ATP</name>
        <dbReference type="ChEBI" id="CHEBI:30616"/>
    </ligand>
</feature>
<feature type="binding site" evidence="1">
    <location>
        <position position="333"/>
    </location>
    <ligand>
        <name>substrate</name>
    </ligand>
</feature>
<feature type="binding site" evidence="1">
    <location>
        <begin position="449"/>
        <end position="450"/>
    </location>
    <ligand>
        <name>ATP</name>
        <dbReference type="ChEBI" id="CHEBI:30616"/>
    </ligand>
</feature>
<feature type="binding site" evidence="1">
    <location>
        <position position="455"/>
    </location>
    <ligand>
        <name>ATP</name>
        <dbReference type="ChEBI" id="CHEBI:30616"/>
    </ligand>
</feature>
<feature type="modified residue" description="N6-acetyllysine" evidence="1">
    <location>
        <position position="87"/>
    </location>
</feature>
<feature type="modified residue" description="N6-acetyllysine" evidence="1">
    <location>
        <position position="523"/>
    </location>
</feature>
<comment type="function">
    <text evidence="1">Involved in the gluconeogenesis. Catalyzes the conversion of oxaloacetate (OAA) to phosphoenolpyruvate (PEP) through direct phosphoryl transfer between the nucleoside triphosphate and OAA.</text>
</comment>
<comment type="catalytic activity">
    <reaction evidence="1">
        <text>oxaloacetate + ATP = phosphoenolpyruvate + ADP + CO2</text>
        <dbReference type="Rhea" id="RHEA:18617"/>
        <dbReference type="ChEBI" id="CHEBI:16452"/>
        <dbReference type="ChEBI" id="CHEBI:16526"/>
        <dbReference type="ChEBI" id="CHEBI:30616"/>
        <dbReference type="ChEBI" id="CHEBI:58702"/>
        <dbReference type="ChEBI" id="CHEBI:456216"/>
        <dbReference type="EC" id="4.1.1.49"/>
    </reaction>
</comment>
<comment type="cofactor">
    <cofactor evidence="1">
        <name>Mn(2+)</name>
        <dbReference type="ChEBI" id="CHEBI:29035"/>
    </cofactor>
    <text evidence="1">Binds 1 Mn(2+) ion per subunit.</text>
</comment>
<comment type="pathway">
    <text evidence="1">Carbohydrate biosynthesis; gluconeogenesis.</text>
</comment>
<comment type="subunit">
    <text evidence="1">Monomer.</text>
</comment>
<comment type="subcellular location">
    <subcellularLocation>
        <location evidence="1">Cytoplasm</location>
    </subcellularLocation>
</comment>
<comment type="similarity">
    <text evidence="1">Belongs to the phosphoenolpyruvate carboxykinase (ATP) family.</text>
</comment>
<organism>
    <name type="scientific">Escherichia coli O45:K1 (strain S88 / ExPEC)</name>
    <dbReference type="NCBI Taxonomy" id="585035"/>
    <lineage>
        <taxon>Bacteria</taxon>
        <taxon>Pseudomonadati</taxon>
        <taxon>Pseudomonadota</taxon>
        <taxon>Gammaproteobacteria</taxon>
        <taxon>Enterobacterales</taxon>
        <taxon>Enterobacteriaceae</taxon>
        <taxon>Escherichia</taxon>
    </lineage>
</organism>
<accession>B7MDM9</accession>
<gene>
    <name evidence="1" type="primary">pckA</name>
    <name type="ordered locus">ECS88_3790</name>
</gene>
<keyword id="KW-0007">Acetylation</keyword>
<keyword id="KW-0067">ATP-binding</keyword>
<keyword id="KW-0963">Cytoplasm</keyword>
<keyword id="KW-0210">Decarboxylase</keyword>
<keyword id="KW-0312">Gluconeogenesis</keyword>
<keyword id="KW-0456">Lyase</keyword>
<keyword id="KW-0464">Manganese</keyword>
<keyword id="KW-0479">Metal-binding</keyword>
<keyword id="KW-0547">Nucleotide-binding</keyword>
<keyword id="KW-1185">Reference proteome</keyword>
<protein>
    <recommendedName>
        <fullName evidence="1">Phosphoenolpyruvate carboxykinase (ATP)</fullName>
        <shortName evidence="1">PCK</shortName>
        <shortName evidence="1">PEP carboxykinase</shortName>
        <shortName evidence="1">PEPCK</shortName>
        <ecNumber evidence="1">4.1.1.49</ecNumber>
    </recommendedName>
</protein>
<sequence>MRVNNGLTPQELEAYGISDVHDIVYNPSYDLLYQEELDPSLTGYERGVLTNLGAVAVDTGIFTGRSPKDKYIVRDDTTRDTFWWADKGKGKNDNKPLSPETWQHLKGLVTKQLSGKRLFVVDAFCGANPDTRLSVRFITEVAWQAHFVKNMFIRPSDEELAGFKPDFIVMNGAKCTNPQWKEQGLNSENFVAFNLTERMQLIGGTWYGGEMKKGMFSMMNYLLPLKGIASMHCSANVGEKGDVAVFFGLSGTGKTTLSTDPKRRLIGDDEHGWDDDGVFNFEGGCYAKTIKLSKEAEPEIYNAIRRDALLENVTVREDGTIDFDDGSKTENTRVSYPIYHIENIVKPVSKAGHATKVIFLTADAFGVLPPVSRLTADQTQYHFLSGFTAKLAGTERGITEPTPTFSACFGAAFLSLHPTQYAEVLVKRMQAAGAQAYLVNTGWNGTGKRISIKDTRAIIDAILNGSLDNAETFTLPMFNLAIPTELPGVDTKILDPRNTYASPEQWQEKAETLAKLFIDNFDKYTDTPAGAALVAAGPKL</sequence>
<evidence type="ECO:0000255" key="1">
    <source>
        <dbReference type="HAMAP-Rule" id="MF_00453"/>
    </source>
</evidence>
<dbReference type="EC" id="4.1.1.49" evidence="1"/>
<dbReference type="EMBL" id="CU928161">
    <property type="protein sequence ID" value="CAR05004.1"/>
    <property type="molecule type" value="Genomic_DNA"/>
</dbReference>
<dbReference type="RefSeq" id="WP_001309803.1">
    <property type="nucleotide sequence ID" value="NC_011742.1"/>
</dbReference>
<dbReference type="SMR" id="B7MDM9"/>
<dbReference type="GeneID" id="86862199"/>
<dbReference type="KEGG" id="ecz:ECS88_3790"/>
<dbReference type="HOGENOM" id="CLU_018247_0_1_6"/>
<dbReference type="UniPathway" id="UPA00138"/>
<dbReference type="Proteomes" id="UP000000747">
    <property type="component" value="Chromosome"/>
</dbReference>
<dbReference type="GO" id="GO:0005829">
    <property type="term" value="C:cytosol"/>
    <property type="evidence" value="ECO:0007669"/>
    <property type="project" value="TreeGrafter"/>
</dbReference>
<dbReference type="GO" id="GO:0005524">
    <property type="term" value="F:ATP binding"/>
    <property type="evidence" value="ECO:0007669"/>
    <property type="project" value="UniProtKB-UniRule"/>
</dbReference>
<dbReference type="GO" id="GO:0046872">
    <property type="term" value="F:metal ion binding"/>
    <property type="evidence" value="ECO:0007669"/>
    <property type="project" value="UniProtKB-KW"/>
</dbReference>
<dbReference type="GO" id="GO:0004612">
    <property type="term" value="F:phosphoenolpyruvate carboxykinase (ATP) activity"/>
    <property type="evidence" value="ECO:0007669"/>
    <property type="project" value="UniProtKB-UniRule"/>
</dbReference>
<dbReference type="GO" id="GO:0006094">
    <property type="term" value="P:gluconeogenesis"/>
    <property type="evidence" value="ECO:0007669"/>
    <property type="project" value="UniProtKB-UniRule"/>
</dbReference>
<dbReference type="CDD" id="cd00484">
    <property type="entry name" value="PEPCK_ATP"/>
    <property type="match status" value="1"/>
</dbReference>
<dbReference type="FunFam" id="2.170.8.10:FF:000001">
    <property type="entry name" value="Phosphoenolpyruvate carboxykinase (ATP)"/>
    <property type="match status" value="1"/>
</dbReference>
<dbReference type="FunFam" id="3.40.449.10:FF:000001">
    <property type="entry name" value="Phosphoenolpyruvate carboxykinase (ATP)"/>
    <property type="match status" value="1"/>
</dbReference>
<dbReference type="Gene3D" id="3.90.228.20">
    <property type="match status" value="1"/>
</dbReference>
<dbReference type="Gene3D" id="3.40.449.10">
    <property type="entry name" value="Phosphoenolpyruvate Carboxykinase, domain 1"/>
    <property type="match status" value="1"/>
</dbReference>
<dbReference type="Gene3D" id="2.170.8.10">
    <property type="entry name" value="Phosphoenolpyruvate Carboxykinase, domain 2"/>
    <property type="match status" value="1"/>
</dbReference>
<dbReference type="HAMAP" id="MF_00453">
    <property type="entry name" value="PEPCK_ATP"/>
    <property type="match status" value="1"/>
</dbReference>
<dbReference type="InterPro" id="IPR001272">
    <property type="entry name" value="PEP_carboxykinase_ATP"/>
</dbReference>
<dbReference type="InterPro" id="IPR013035">
    <property type="entry name" value="PEP_carboxykinase_C"/>
</dbReference>
<dbReference type="InterPro" id="IPR008210">
    <property type="entry name" value="PEP_carboxykinase_N"/>
</dbReference>
<dbReference type="InterPro" id="IPR015994">
    <property type="entry name" value="PEPCK_ATP_CS"/>
</dbReference>
<dbReference type="NCBIfam" id="TIGR00224">
    <property type="entry name" value="pckA"/>
    <property type="match status" value="1"/>
</dbReference>
<dbReference type="NCBIfam" id="NF006819">
    <property type="entry name" value="PRK09344.1-1"/>
    <property type="match status" value="1"/>
</dbReference>
<dbReference type="NCBIfam" id="NF006820">
    <property type="entry name" value="PRK09344.1-2"/>
    <property type="match status" value="1"/>
</dbReference>
<dbReference type="NCBIfam" id="NF006821">
    <property type="entry name" value="PRK09344.1-3"/>
    <property type="match status" value="1"/>
</dbReference>
<dbReference type="PANTHER" id="PTHR30031:SF0">
    <property type="entry name" value="PHOSPHOENOLPYRUVATE CARBOXYKINASE (ATP)"/>
    <property type="match status" value="1"/>
</dbReference>
<dbReference type="PANTHER" id="PTHR30031">
    <property type="entry name" value="PHOSPHOENOLPYRUVATE CARBOXYKINASE ATP"/>
    <property type="match status" value="1"/>
</dbReference>
<dbReference type="Pfam" id="PF01293">
    <property type="entry name" value="PEPCK_ATP"/>
    <property type="match status" value="1"/>
</dbReference>
<dbReference type="PIRSF" id="PIRSF006294">
    <property type="entry name" value="PEP_crbxkin"/>
    <property type="match status" value="1"/>
</dbReference>
<dbReference type="SUPFAM" id="SSF68923">
    <property type="entry name" value="PEP carboxykinase N-terminal domain"/>
    <property type="match status" value="1"/>
</dbReference>
<dbReference type="SUPFAM" id="SSF53795">
    <property type="entry name" value="PEP carboxykinase-like"/>
    <property type="match status" value="1"/>
</dbReference>
<dbReference type="PROSITE" id="PS00532">
    <property type="entry name" value="PEPCK_ATP"/>
    <property type="match status" value="1"/>
</dbReference>
<reference key="1">
    <citation type="journal article" date="2009" name="PLoS Genet.">
        <title>Organised genome dynamics in the Escherichia coli species results in highly diverse adaptive paths.</title>
        <authorList>
            <person name="Touchon M."/>
            <person name="Hoede C."/>
            <person name="Tenaillon O."/>
            <person name="Barbe V."/>
            <person name="Baeriswyl S."/>
            <person name="Bidet P."/>
            <person name="Bingen E."/>
            <person name="Bonacorsi S."/>
            <person name="Bouchier C."/>
            <person name="Bouvet O."/>
            <person name="Calteau A."/>
            <person name="Chiapello H."/>
            <person name="Clermont O."/>
            <person name="Cruveiller S."/>
            <person name="Danchin A."/>
            <person name="Diard M."/>
            <person name="Dossat C."/>
            <person name="Karoui M.E."/>
            <person name="Frapy E."/>
            <person name="Garry L."/>
            <person name="Ghigo J.M."/>
            <person name="Gilles A.M."/>
            <person name="Johnson J."/>
            <person name="Le Bouguenec C."/>
            <person name="Lescat M."/>
            <person name="Mangenot S."/>
            <person name="Martinez-Jehanne V."/>
            <person name="Matic I."/>
            <person name="Nassif X."/>
            <person name="Oztas S."/>
            <person name="Petit M.A."/>
            <person name="Pichon C."/>
            <person name="Rouy Z."/>
            <person name="Ruf C.S."/>
            <person name="Schneider D."/>
            <person name="Tourret J."/>
            <person name="Vacherie B."/>
            <person name="Vallenet D."/>
            <person name="Medigue C."/>
            <person name="Rocha E.P.C."/>
            <person name="Denamur E."/>
        </authorList>
    </citation>
    <scope>NUCLEOTIDE SEQUENCE [LARGE SCALE GENOMIC DNA]</scope>
    <source>
        <strain>S88 / ExPEC</strain>
    </source>
</reference>